<reference key="1">
    <citation type="journal article" date="1996" name="Nucleic Acids Res.">
        <title>Complete sequence analysis of the genome of the bacterium Mycoplasma pneumoniae.</title>
        <authorList>
            <person name="Himmelreich R."/>
            <person name="Hilbert H."/>
            <person name="Plagens H."/>
            <person name="Pirkl E."/>
            <person name="Li B.-C."/>
            <person name="Herrmann R."/>
        </authorList>
    </citation>
    <scope>NUCLEOTIDE SEQUENCE [LARGE SCALE GENOMIC DNA]</scope>
    <source>
        <strain>ATCC 29342 / M129 / Subtype 1</strain>
    </source>
</reference>
<organism>
    <name type="scientific">Mycoplasma pneumoniae (strain ATCC 29342 / M129 / Subtype 1)</name>
    <name type="common">Mycoplasmoides pneumoniae</name>
    <dbReference type="NCBI Taxonomy" id="272634"/>
    <lineage>
        <taxon>Bacteria</taxon>
        <taxon>Bacillati</taxon>
        <taxon>Mycoplasmatota</taxon>
        <taxon>Mycoplasmoidales</taxon>
        <taxon>Mycoplasmoidaceae</taxon>
        <taxon>Mycoplasmoides</taxon>
    </lineage>
</organism>
<sequence length="144" mass="17174">MQVEYLDLISQAKEIAETQFKAEPFSFDAIWKEVVKHFKISKQDEPNLISRFYQDFLEDPNFVYLGERNWKLRDFMKFDEWNKISQAMFVTKEIFEEGYEDLSNKKKENEEEVNDFIMGNDGDDNSTGDEIVQGLINDFRDDNQ</sequence>
<evidence type="ECO:0000250" key="1"/>
<evidence type="ECO:0000255" key="2">
    <source>
        <dbReference type="PROSITE-ProRule" id="PRU01261"/>
    </source>
</evidence>
<evidence type="ECO:0000305" key="3"/>
<feature type="chain" id="PRO_0000204319" description="Probable DNA-directed RNA polymerase subunit delta">
    <location>
        <begin position="1"/>
        <end position="144"/>
    </location>
</feature>
<feature type="domain" description="HTH HARE-type" evidence="2">
    <location>
        <begin position="6"/>
        <end position="75"/>
    </location>
</feature>
<protein>
    <recommendedName>
        <fullName>Probable DNA-directed RNA polymerase subunit delta</fullName>
    </recommendedName>
    <alternativeName>
        <fullName>RNAP delta factor</fullName>
    </alternativeName>
</protein>
<proteinExistence type="inferred from homology"/>
<dbReference type="EMBL" id="U00089">
    <property type="protein sequence ID" value="AAB95778.1"/>
    <property type="status" value="ALT_INIT"/>
    <property type="molecule type" value="Genomic_DNA"/>
</dbReference>
<dbReference type="PIR" id="S73456">
    <property type="entry name" value="S73456"/>
</dbReference>
<dbReference type="RefSeq" id="NP_109712.1">
    <property type="nucleotide sequence ID" value="NC_000912.1"/>
</dbReference>
<dbReference type="RefSeq" id="WP_014574844.1">
    <property type="nucleotide sequence ID" value="NZ_OU342337.1"/>
</dbReference>
<dbReference type="SMR" id="P75090"/>
<dbReference type="IntAct" id="P75090">
    <property type="interactions" value="1"/>
</dbReference>
<dbReference type="STRING" id="272634.MPN_024"/>
<dbReference type="EnsemblBacteria" id="AAB95778">
    <property type="protein sequence ID" value="AAB95778"/>
    <property type="gene ID" value="MPN_024"/>
</dbReference>
<dbReference type="GeneID" id="66609335"/>
<dbReference type="KEGG" id="mpn:MPN_024"/>
<dbReference type="PATRIC" id="fig|272634.6.peg.23"/>
<dbReference type="HOGENOM" id="CLU_1775406_0_0_14"/>
<dbReference type="OrthoDB" id="400111at2"/>
<dbReference type="Proteomes" id="UP000000808">
    <property type="component" value="Chromosome"/>
</dbReference>
<dbReference type="GO" id="GO:0000428">
    <property type="term" value="C:DNA-directed RNA polymerase complex"/>
    <property type="evidence" value="ECO:0007669"/>
    <property type="project" value="UniProtKB-KW"/>
</dbReference>
<dbReference type="GO" id="GO:0003899">
    <property type="term" value="F:DNA-directed RNA polymerase activity"/>
    <property type="evidence" value="ECO:0007669"/>
    <property type="project" value="UniProtKB-UniRule"/>
</dbReference>
<dbReference type="GO" id="GO:0006351">
    <property type="term" value="P:DNA-templated transcription"/>
    <property type="evidence" value="ECO:0007669"/>
    <property type="project" value="InterPro"/>
</dbReference>
<dbReference type="GO" id="GO:0006355">
    <property type="term" value="P:regulation of DNA-templated transcription"/>
    <property type="evidence" value="ECO:0007669"/>
    <property type="project" value="UniProtKB-UniRule"/>
</dbReference>
<dbReference type="Gene3D" id="1.10.10.1250">
    <property type="entry name" value="RNA polymerase, subunit delta, N-terminal domain"/>
    <property type="match status" value="1"/>
</dbReference>
<dbReference type="HAMAP" id="MF_00357">
    <property type="entry name" value="RNApol_bact_RpoE"/>
    <property type="match status" value="1"/>
</dbReference>
<dbReference type="InterPro" id="IPR007759">
    <property type="entry name" value="Asxl_HARE-HTH"/>
</dbReference>
<dbReference type="InterPro" id="IPR038087">
    <property type="entry name" value="RNAP_delta_N_dom_sf"/>
</dbReference>
<dbReference type="InterPro" id="IPR029757">
    <property type="entry name" value="RpoE"/>
</dbReference>
<dbReference type="NCBIfam" id="TIGR04567">
    <property type="entry name" value="RNAP_delt_lowGC"/>
    <property type="match status" value="1"/>
</dbReference>
<dbReference type="Pfam" id="PF05066">
    <property type="entry name" value="HARE-HTH"/>
    <property type="match status" value="1"/>
</dbReference>
<dbReference type="PROSITE" id="PS51913">
    <property type="entry name" value="HTH_HARE"/>
    <property type="match status" value="1"/>
</dbReference>
<keyword id="KW-0240">DNA-directed RNA polymerase</keyword>
<keyword id="KW-0548">Nucleotidyltransferase</keyword>
<keyword id="KW-1185">Reference proteome</keyword>
<keyword id="KW-0804">Transcription</keyword>
<keyword id="KW-0808">Transferase</keyword>
<gene>
    <name type="primary">rpoE</name>
    <name type="ordered locus">MPN_024</name>
    <name type="ORF">MP130</name>
</gene>
<comment type="function">
    <text evidence="1">Participates in both the initiation and recycling phases of transcription. In the presence of the delta subunit, RNAP displays an increased specificity of transcription, a decreased affinity for nucleic acids, and an increased efficiency of RNA synthesis because of enhanced recycling (By similarity).</text>
</comment>
<comment type="subunit">
    <text evidence="1">RNAP is composed of a core of 2 alpha, a beta and a beta' subunits. The core is associated with a delta subunit and one of several sigma factors (By similarity).</text>
</comment>
<comment type="similarity">
    <text evidence="3">Belongs to the RpoE family.</text>
</comment>
<comment type="sequence caution" evidence="3">
    <conflict type="erroneous initiation">
        <sequence resource="EMBL-CDS" id="AAB95778"/>
    </conflict>
</comment>
<name>RPOE_MYCPN</name>
<accession>P75090</accession>